<name>LEPA_CAUVC</name>
<sequence>MRTRMTSTPLDKIRNFSIVAHIDHGKSTLSDRLIQTTGGLTAREMSAQVLDNMDIEKERGITIKAQTVRLTYKAADGETYILNLMDTPGHVDFAYEVSRSLAACEGSILVVDASQGVEAQTLANVYQAIDNNHEIVPVLNKVDLPAADVDRVKAQIEDVIGLDASDAVECSAKTGVGIPEVLEAIVTRLPPPKGDPNAPLKALLVDAWYDAYLGVVVLVRIFDGSLKAGQQVRMMQTGATHRIDKVGVFTPKATDVEYLGPGEVGFFTASIKEVADAAVGDTITDEKKPTAEALKGFKEVVPVVFCGLFPVDAADFEDLRAAVGKLRLNDASFTYEMESSAALGFGFRCGFLGLLHLEIIQERLSREFDLDLIATAPSVVYKIKLRNGDEIELHNPADLPDVMQIEEIAEPWIKATIFTPDDYLGGVIKLCQDRRGMQRELSYVGSRAMVVYDLPLNEVVFDFYDRLKSISKGYASFDYQLEDYRAGDLVKMSILVNSEPVDALSMLVHRSRAESRGRGMCEKMKELIPQHMFVIPIQAAIGGRIIARETVRALRKDVTAKCYGGDASRKKKLLEKQKEGKKRMRQFGKVEIPQEAFIAALKMDED</sequence>
<keyword id="KW-0997">Cell inner membrane</keyword>
<keyword id="KW-1003">Cell membrane</keyword>
<keyword id="KW-0342">GTP-binding</keyword>
<keyword id="KW-0378">Hydrolase</keyword>
<keyword id="KW-0472">Membrane</keyword>
<keyword id="KW-0547">Nucleotide-binding</keyword>
<keyword id="KW-0648">Protein biosynthesis</keyword>
<keyword id="KW-1185">Reference proteome</keyword>
<feature type="chain" id="PRO_0000176254" description="Elongation factor 4">
    <location>
        <begin position="1"/>
        <end position="606"/>
    </location>
</feature>
<feature type="domain" description="tr-type G">
    <location>
        <begin position="11"/>
        <end position="193"/>
    </location>
</feature>
<feature type="binding site" evidence="1">
    <location>
        <begin position="23"/>
        <end position="28"/>
    </location>
    <ligand>
        <name>GTP</name>
        <dbReference type="ChEBI" id="CHEBI:37565"/>
    </ligand>
</feature>
<feature type="binding site" evidence="1">
    <location>
        <begin position="140"/>
        <end position="143"/>
    </location>
    <ligand>
        <name>GTP</name>
        <dbReference type="ChEBI" id="CHEBI:37565"/>
    </ligand>
</feature>
<accession>Q9A9F4</accession>
<evidence type="ECO:0000255" key="1">
    <source>
        <dbReference type="HAMAP-Rule" id="MF_00071"/>
    </source>
</evidence>
<evidence type="ECO:0000305" key="2"/>
<organism>
    <name type="scientific">Caulobacter vibrioides (strain ATCC 19089 / CIP 103742 / CB 15)</name>
    <name type="common">Caulobacter crescentus</name>
    <dbReference type="NCBI Taxonomy" id="190650"/>
    <lineage>
        <taxon>Bacteria</taxon>
        <taxon>Pseudomonadati</taxon>
        <taxon>Pseudomonadota</taxon>
        <taxon>Alphaproteobacteria</taxon>
        <taxon>Caulobacterales</taxon>
        <taxon>Caulobacteraceae</taxon>
        <taxon>Caulobacter</taxon>
    </lineage>
</organism>
<proteinExistence type="inferred from homology"/>
<gene>
    <name evidence="1" type="primary">lepA</name>
    <name type="ordered locus">CC_1034</name>
</gene>
<protein>
    <recommendedName>
        <fullName evidence="1">Elongation factor 4</fullName>
        <shortName evidence="1">EF-4</shortName>
        <ecNumber evidence="1">3.6.5.n1</ecNumber>
    </recommendedName>
    <alternativeName>
        <fullName evidence="1">Ribosomal back-translocase LepA</fullName>
    </alternativeName>
</protein>
<comment type="function">
    <text evidence="1">Required for accurate and efficient protein synthesis under certain stress conditions. May act as a fidelity factor of the translation reaction, by catalyzing a one-codon backward translocation of tRNAs on improperly translocated ribosomes. Back-translocation proceeds from a post-translocation (POST) complex to a pre-translocation (PRE) complex, thus giving elongation factor G a second chance to translocate the tRNAs correctly. Binds to ribosomes in a GTP-dependent manner.</text>
</comment>
<comment type="catalytic activity">
    <reaction evidence="1">
        <text>GTP + H2O = GDP + phosphate + H(+)</text>
        <dbReference type="Rhea" id="RHEA:19669"/>
        <dbReference type="ChEBI" id="CHEBI:15377"/>
        <dbReference type="ChEBI" id="CHEBI:15378"/>
        <dbReference type="ChEBI" id="CHEBI:37565"/>
        <dbReference type="ChEBI" id="CHEBI:43474"/>
        <dbReference type="ChEBI" id="CHEBI:58189"/>
        <dbReference type="EC" id="3.6.5.n1"/>
    </reaction>
</comment>
<comment type="subcellular location">
    <subcellularLocation>
        <location evidence="1">Cell inner membrane</location>
        <topology evidence="1">Peripheral membrane protein</topology>
        <orientation evidence="1">Cytoplasmic side</orientation>
    </subcellularLocation>
</comment>
<comment type="similarity">
    <text evidence="1">Belongs to the TRAFAC class translation factor GTPase superfamily. Classic translation factor GTPase family. LepA subfamily.</text>
</comment>
<comment type="sequence caution" evidence="2">
    <conflict type="erroneous initiation">
        <sequence resource="EMBL-CDS" id="AAK23018"/>
    </conflict>
</comment>
<dbReference type="EC" id="3.6.5.n1" evidence="1"/>
<dbReference type="EMBL" id="AE005673">
    <property type="protein sequence ID" value="AAK23018.1"/>
    <property type="status" value="ALT_INIT"/>
    <property type="molecule type" value="Genomic_DNA"/>
</dbReference>
<dbReference type="PIR" id="F87377">
    <property type="entry name" value="F87377"/>
</dbReference>
<dbReference type="RefSeq" id="NP_419850.1">
    <property type="nucleotide sequence ID" value="NC_002696.2"/>
</dbReference>
<dbReference type="SMR" id="Q9A9F4"/>
<dbReference type="STRING" id="190650.CC_1034"/>
<dbReference type="EnsemblBacteria" id="AAK23018">
    <property type="protein sequence ID" value="AAK23018"/>
    <property type="gene ID" value="CC_1034"/>
</dbReference>
<dbReference type="KEGG" id="ccr:CC_1034"/>
<dbReference type="PATRIC" id="fig|190650.5.peg.1050"/>
<dbReference type="eggNOG" id="COG0481">
    <property type="taxonomic scope" value="Bacteria"/>
</dbReference>
<dbReference type="HOGENOM" id="CLU_009995_3_3_5"/>
<dbReference type="Proteomes" id="UP000001816">
    <property type="component" value="Chromosome"/>
</dbReference>
<dbReference type="GO" id="GO:0005886">
    <property type="term" value="C:plasma membrane"/>
    <property type="evidence" value="ECO:0007669"/>
    <property type="project" value="UniProtKB-SubCell"/>
</dbReference>
<dbReference type="GO" id="GO:0005525">
    <property type="term" value="F:GTP binding"/>
    <property type="evidence" value="ECO:0007669"/>
    <property type="project" value="UniProtKB-UniRule"/>
</dbReference>
<dbReference type="GO" id="GO:0003924">
    <property type="term" value="F:GTPase activity"/>
    <property type="evidence" value="ECO:0007669"/>
    <property type="project" value="UniProtKB-UniRule"/>
</dbReference>
<dbReference type="GO" id="GO:0097216">
    <property type="term" value="F:guanosine tetraphosphate binding"/>
    <property type="evidence" value="ECO:0007669"/>
    <property type="project" value="UniProtKB-ARBA"/>
</dbReference>
<dbReference type="GO" id="GO:0043022">
    <property type="term" value="F:ribosome binding"/>
    <property type="evidence" value="ECO:0007669"/>
    <property type="project" value="UniProtKB-UniRule"/>
</dbReference>
<dbReference type="GO" id="GO:0003746">
    <property type="term" value="F:translation elongation factor activity"/>
    <property type="evidence" value="ECO:0007669"/>
    <property type="project" value="UniProtKB-UniRule"/>
</dbReference>
<dbReference type="GO" id="GO:0045727">
    <property type="term" value="P:positive regulation of translation"/>
    <property type="evidence" value="ECO:0007669"/>
    <property type="project" value="UniProtKB-UniRule"/>
</dbReference>
<dbReference type="CDD" id="cd03699">
    <property type="entry name" value="EF4_II"/>
    <property type="match status" value="1"/>
</dbReference>
<dbReference type="CDD" id="cd16260">
    <property type="entry name" value="EF4_III"/>
    <property type="match status" value="1"/>
</dbReference>
<dbReference type="CDD" id="cd01890">
    <property type="entry name" value="LepA"/>
    <property type="match status" value="1"/>
</dbReference>
<dbReference type="CDD" id="cd03709">
    <property type="entry name" value="lepA_C"/>
    <property type="match status" value="1"/>
</dbReference>
<dbReference type="FunFam" id="3.40.50.300:FF:000078">
    <property type="entry name" value="Elongation factor 4"/>
    <property type="match status" value="1"/>
</dbReference>
<dbReference type="FunFam" id="2.40.30.10:FF:000015">
    <property type="entry name" value="Translation factor GUF1, mitochondrial"/>
    <property type="match status" value="1"/>
</dbReference>
<dbReference type="FunFam" id="3.30.70.240:FF:000007">
    <property type="entry name" value="Translation factor GUF1, mitochondrial"/>
    <property type="match status" value="1"/>
</dbReference>
<dbReference type="FunFam" id="3.30.70.2570:FF:000001">
    <property type="entry name" value="Translation factor GUF1, mitochondrial"/>
    <property type="match status" value="1"/>
</dbReference>
<dbReference type="FunFam" id="3.30.70.870:FF:000004">
    <property type="entry name" value="Translation factor GUF1, mitochondrial"/>
    <property type="match status" value="1"/>
</dbReference>
<dbReference type="Gene3D" id="3.30.70.240">
    <property type="match status" value="1"/>
</dbReference>
<dbReference type="Gene3D" id="3.30.70.2570">
    <property type="entry name" value="Elongation factor 4, C-terminal domain"/>
    <property type="match status" value="1"/>
</dbReference>
<dbReference type="Gene3D" id="3.30.70.870">
    <property type="entry name" value="Elongation Factor G (Translational Gtpase), domain 3"/>
    <property type="match status" value="1"/>
</dbReference>
<dbReference type="Gene3D" id="3.40.50.300">
    <property type="entry name" value="P-loop containing nucleotide triphosphate hydrolases"/>
    <property type="match status" value="1"/>
</dbReference>
<dbReference type="Gene3D" id="2.40.30.10">
    <property type="entry name" value="Translation factors"/>
    <property type="match status" value="1"/>
</dbReference>
<dbReference type="HAMAP" id="MF_00071">
    <property type="entry name" value="LepA"/>
    <property type="match status" value="1"/>
</dbReference>
<dbReference type="InterPro" id="IPR006297">
    <property type="entry name" value="EF-4"/>
</dbReference>
<dbReference type="InterPro" id="IPR035647">
    <property type="entry name" value="EFG_III/V"/>
</dbReference>
<dbReference type="InterPro" id="IPR000640">
    <property type="entry name" value="EFG_V-like"/>
</dbReference>
<dbReference type="InterPro" id="IPR004161">
    <property type="entry name" value="EFTu-like_2"/>
</dbReference>
<dbReference type="InterPro" id="IPR031157">
    <property type="entry name" value="G_TR_CS"/>
</dbReference>
<dbReference type="InterPro" id="IPR038363">
    <property type="entry name" value="LepA_C_sf"/>
</dbReference>
<dbReference type="InterPro" id="IPR013842">
    <property type="entry name" value="LepA_CTD"/>
</dbReference>
<dbReference type="InterPro" id="IPR035654">
    <property type="entry name" value="LepA_IV"/>
</dbReference>
<dbReference type="InterPro" id="IPR027417">
    <property type="entry name" value="P-loop_NTPase"/>
</dbReference>
<dbReference type="InterPro" id="IPR005225">
    <property type="entry name" value="Small_GTP-bd"/>
</dbReference>
<dbReference type="InterPro" id="IPR000795">
    <property type="entry name" value="T_Tr_GTP-bd_dom"/>
</dbReference>
<dbReference type="NCBIfam" id="TIGR01393">
    <property type="entry name" value="lepA"/>
    <property type="match status" value="1"/>
</dbReference>
<dbReference type="NCBIfam" id="TIGR00231">
    <property type="entry name" value="small_GTP"/>
    <property type="match status" value="1"/>
</dbReference>
<dbReference type="PANTHER" id="PTHR43512:SF4">
    <property type="entry name" value="TRANSLATION FACTOR GUF1 HOMOLOG, CHLOROPLASTIC"/>
    <property type="match status" value="1"/>
</dbReference>
<dbReference type="PANTHER" id="PTHR43512">
    <property type="entry name" value="TRANSLATION FACTOR GUF1-RELATED"/>
    <property type="match status" value="1"/>
</dbReference>
<dbReference type="Pfam" id="PF00679">
    <property type="entry name" value="EFG_C"/>
    <property type="match status" value="1"/>
</dbReference>
<dbReference type="Pfam" id="PF00009">
    <property type="entry name" value="GTP_EFTU"/>
    <property type="match status" value="1"/>
</dbReference>
<dbReference type="Pfam" id="PF03144">
    <property type="entry name" value="GTP_EFTU_D2"/>
    <property type="match status" value="1"/>
</dbReference>
<dbReference type="Pfam" id="PF06421">
    <property type="entry name" value="LepA_C"/>
    <property type="match status" value="1"/>
</dbReference>
<dbReference type="PRINTS" id="PR00315">
    <property type="entry name" value="ELONGATNFCT"/>
</dbReference>
<dbReference type="SMART" id="SM00838">
    <property type="entry name" value="EFG_C"/>
    <property type="match status" value="1"/>
</dbReference>
<dbReference type="SUPFAM" id="SSF54980">
    <property type="entry name" value="EF-G C-terminal domain-like"/>
    <property type="match status" value="2"/>
</dbReference>
<dbReference type="SUPFAM" id="SSF52540">
    <property type="entry name" value="P-loop containing nucleoside triphosphate hydrolases"/>
    <property type="match status" value="1"/>
</dbReference>
<dbReference type="PROSITE" id="PS00301">
    <property type="entry name" value="G_TR_1"/>
    <property type="match status" value="1"/>
</dbReference>
<dbReference type="PROSITE" id="PS51722">
    <property type="entry name" value="G_TR_2"/>
    <property type="match status" value="1"/>
</dbReference>
<reference key="1">
    <citation type="journal article" date="2001" name="Proc. Natl. Acad. Sci. U.S.A.">
        <title>Complete genome sequence of Caulobacter crescentus.</title>
        <authorList>
            <person name="Nierman W.C."/>
            <person name="Feldblyum T.V."/>
            <person name="Laub M.T."/>
            <person name="Paulsen I.T."/>
            <person name="Nelson K.E."/>
            <person name="Eisen J.A."/>
            <person name="Heidelberg J.F."/>
            <person name="Alley M.R.K."/>
            <person name="Ohta N."/>
            <person name="Maddock J.R."/>
            <person name="Potocka I."/>
            <person name="Nelson W.C."/>
            <person name="Newton A."/>
            <person name="Stephens C."/>
            <person name="Phadke N.D."/>
            <person name="Ely B."/>
            <person name="DeBoy R.T."/>
            <person name="Dodson R.J."/>
            <person name="Durkin A.S."/>
            <person name="Gwinn M.L."/>
            <person name="Haft D.H."/>
            <person name="Kolonay J.F."/>
            <person name="Smit J."/>
            <person name="Craven M.B."/>
            <person name="Khouri H.M."/>
            <person name="Shetty J."/>
            <person name="Berry K.J."/>
            <person name="Utterback T.R."/>
            <person name="Tran K."/>
            <person name="Wolf A.M."/>
            <person name="Vamathevan J.J."/>
            <person name="Ermolaeva M.D."/>
            <person name="White O."/>
            <person name="Salzberg S.L."/>
            <person name="Venter J.C."/>
            <person name="Shapiro L."/>
            <person name="Fraser C.M."/>
        </authorList>
    </citation>
    <scope>NUCLEOTIDE SEQUENCE [LARGE SCALE GENOMIC DNA]</scope>
    <source>
        <strain>ATCC 19089 / CIP 103742 / CB 15</strain>
    </source>
</reference>